<protein>
    <recommendedName>
        <fullName evidence="1">Large ribosomal subunit protein uL1</fullName>
    </recommendedName>
    <alternativeName>
        <fullName evidence="2">50S ribosomal protein L1</fullName>
    </alternativeName>
</protein>
<sequence length="235" mass="24680">MGNKSKAYKAAAEKIDKGRLYTPLKAAELVKETSSKNCDATVDVAIRLGVDPRKADQLVRGTVSLPNGTGKSVRVAVFAEGEKATEAQAAGADIVGTTELIEQITAGTIEFDVAIATPDQMAKVGRVARVLGPRGLMPNPKTGTVTNDVAKAIAEVKGGKISFRVDKASNLHAIIGKASFDAEKLAENYGALLDEINRIKPSSAKGIYVKKVTLTSTFGPGVPVDPSIQKNYTQA</sequence>
<feature type="chain" id="PRO_0000125647" description="Large ribosomal subunit protein uL1">
    <location>
        <begin position="1"/>
        <end position="235"/>
    </location>
</feature>
<reference key="1">
    <citation type="journal article" date="2003" name="Nucleic Acids Res.">
        <title>The complete genome sequence and analysis of Corynebacterium diphtheriae NCTC13129.</title>
        <authorList>
            <person name="Cerdeno-Tarraga A.-M."/>
            <person name="Efstratiou A."/>
            <person name="Dover L.G."/>
            <person name="Holden M.T.G."/>
            <person name="Pallen M.J."/>
            <person name="Bentley S.D."/>
            <person name="Besra G.S."/>
            <person name="Churcher C.M."/>
            <person name="James K.D."/>
            <person name="De Zoysa A."/>
            <person name="Chillingworth T."/>
            <person name="Cronin A."/>
            <person name="Dowd L."/>
            <person name="Feltwell T."/>
            <person name="Hamlin N."/>
            <person name="Holroyd S."/>
            <person name="Jagels K."/>
            <person name="Moule S."/>
            <person name="Quail M.A."/>
            <person name="Rabbinowitsch E."/>
            <person name="Rutherford K.M."/>
            <person name="Thomson N.R."/>
            <person name="Unwin L."/>
            <person name="Whitehead S."/>
            <person name="Barrell B.G."/>
            <person name="Parkhill J."/>
        </authorList>
    </citation>
    <scope>NUCLEOTIDE SEQUENCE [LARGE SCALE GENOMIC DNA]</scope>
    <source>
        <strain>ATCC 700971 / NCTC 13129 / Biotype gravis</strain>
    </source>
</reference>
<keyword id="KW-1185">Reference proteome</keyword>
<keyword id="KW-0678">Repressor</keyword>
<keyword id="KW-0687">Ribonucleoprotein</keyword>
<keyword id="KW-0689">Ribosomal protein</keyword>
<keyword id="KW-0694">RNA-binding</keyword>
<keyword id="KW-0699">rRNA-binding</keyword>
<keyword id="KW-0810">Translation regulation</keyword>
<keyword id="KW-0820">tRNA-binding</keyword>
<dbReference type="EMBL" id="BX248355">
    <property type="protein sequence ID" value="CAE48937.1"/>
    <property type="molecule type" value="Genomic_DNA"/>
</dbReference>
<dbReference type="RefSeq" id="WP_010934298.1">
    <property type="nucleotide sequence ID" value="NC_002935.2"/>
</dbReference>
<dbReference type="SMR" id="Q6NJG9"/>
<dbReference type="STRING" id="257309.DIP0433"/>
<dbReference type="KEGG" id="cdi:DIP0433"/>
<dbReference type="HOGENOM" id="CLU_062853_0_0_11"/>
<dbReference type="Proteomes" id="UP000002198">
    <property type="component" value="Chromosome"/>
</dbReference>
<dbReference type="GO" id="GO:0015934">
    <property type="term" value="C:large ribosomal subunit"/>
    <property type="evidence" value="ECO:0007669"/>
    <property type="project" value="InterPro"/>
</dbReference>
<dbReference type="GO" id="GO:0019843">
    <property type="term" value="F:rRNA binding"/>
    <property type="evidence" value="ECO:0007669"/>
    <property type="project" value="UniProtKB-UniRule"/>
</dbReference>
<dbReference type="GO" id="GO:0003735">
    <property type="term" value="F:structural constituent of ribosome"/>
    <property type="evidence" value="ECO:0007669"/>
    <property type="project" value="InterPro"/>
</dbReference>
<dbReference type="GO" id="GO:0000049">
    <property type="term" value="F:tRNA binding"/>
    <property type="evidence" value="ECO:0007669"/>
    <property type="project" value="UniProtKB-KW"/>
</dbReference>
<dbReference type="GO" id="GO:0006417">
    <property type="term" value="P:regulation of translation"/>
    <property type="evidence" value="ECO:0007669"/>
    <property type="project" value="UniProtKB-KW"/>
</dbReference>
<dbReference type="GO" id="GO:0006412">
    <property type="term" value="P:translation"/>
    <property type="evidence" value="ECO:0007669"/>
    <property type="project" value="UniProtKB-UniRule"/>
</dbReference>
<dbReference type="CDD" id="cd00403">
    <property type="entry name" value="Ribosomal_L1"/>
    <property type="match status" value="1"/>
</dbReference>
<dbReference type="FunFam" id="3.40.50.790:FF:000001">
    <property type="entry name" value="50S ribosomal protein L1"/>
    <property type="match status" value="1"/>
</dbReference>
<dbReference type="Gene3D" id="3.30.190.20">
    <property type="match status" value="1"/>
</dbReference>
<dbReference type="Gene3D" id="3.40.50.790">
    <property type="match status" value="1"/>
</dbReference>
<dbReference type="HAMAP" id="MF_01318_B">
    <property type="entry name" value="Ribosomal_uL1_B"/>
    <property type="match status" value="1"/>
</dbReference>
<dbReference type="InterPro" id="IPR005878">
    <property type="entry name" value="Ribosom_uL1_bac-type"/>
</dbReference>
<dbReference type="InterPro" id="IPR002143">
    <property type="entry name" value="Ribosomal_uL1"/>
</dbReference>
<dbReference type="InterPro" id="IPR023674">
    <property type="entry name" value="Ribosomal_uL1-like"/>
</dbReference>
<dbReference type="InterPro" id="IPR028364">
    <property type="entry name" value="Ribosomal_uL1/biogenesis"/>
</dbReference>
<dbReference type="InterPro" id="IPR016095">
    <property type="entry name" value="Ribosomal_uL1_3-a/b-sand"/>
</dbReference>
<dbReference type="InterPro" id="IPR023673">
    <property type="entry name" value="Ribosomal_uL1_CS"/>
</dbReference>
<dbReference type="NCBIfam" id="TIGR01169">
    <property type="entry name" value="rplA_bact"/>
    <property type="match status" value="1"/>
</dbReference>
<dbReference type="PANTHER" id="PTHR36427">
    <property type="entry name" value="54S RIBOSOMAL PROTEIN L1, MITOCHONDRIAL"/>
    <property type="match status" value="1"/>
</dbReference>
<dbReference type="PANTHER" id="PTHR36427:SF3">
    <property type="entry name" value="LARGE RIBOSOMAL SUBUNIT PROTEIN UL1M"/>
    <property type="match status" value="1"/>
</dbReference>
<dbReference type="Pfam" id="PF00687">
    <property type="entry name" value="Ribosomal_L1"/>
    <property type="match status" value="1"/>
</dbReference>
<dbReference type="PIRSF" id="PIRSF002155">
    <property type="entry name" value="Ribosomal_L1"/>
    <property type="match status" value="1"/>
</dbReference>
<dbReference type="SUPFAM" id="SSF56808">
    <property type="entry name" value="Ribosomal protein L1"/>
    <property type="match status" value="1"/>
</dbReference>
<dbReference type="PROSITE" id="PS01199">
    <property type="entry name" value="RIBOSOMAL_L1"/>
    <property type="match status" value="1"/>
</dbReference>
<comment type="function">
    <text evidence="1">Binds directly to 23S rRNA. The L1 stalk is quite mobile in the ribosome, and is involved in E site tRNA release.</text>
</comment>
<comment type="function">
    <text evidence="1">Protein L1 is also a translational repressor protein, it controls the translation of the L11 operon by binding to its mRNA.</text>
</comment>
<comment type="subunit">
    <text evidence="1">Part of the 50S ribosomal subunit.</text>
</comment>
<comment type="similarity">
    <text evidence="1">Belongs to the universal ribosomal protein uL1 family.</text>
</comment>
<gene>
    <name evidence="1" type="primary">rplA</name>
    <name type="ordered locus">DIP0433</name>
</gene>
<evidence type="ECO:0000255" key="1">
    <source>
        <dbReference type="HAMAP-Rule" id="MF_01318"/>
    </source>
</evidence>
<evidence type="ECO:0000305" key="2"/>
<accession>Q6NJG9</accession>
<proteinExistence type="inferred from homology"/>
<organism>
    <name type="scientific">Corynebacterium diphtheriae (strain ATCC 700971 / NCTC 13129 / Biotype gravis)</name>
    <dbReference type="NCBI Taxonomy" id="257309"/>
    <lineage>
        <taxon>Bacteria</taxon>
        <taxon>Bacillati</taxon>
        <taxon>Actinomycetota</taxon>
        <taxon>Actinomycetes</taxon>
        <taxon>Mycobacteriales</taxon>
        <taxon>Corynebacteriaceae</taxon>
        <taxon>Corynebacterium</taxon>
    </lineage>
</organism>
<name>RL1_CORDI</name>